<name>RGXA_ASPFN</name>
<reference key="1">
    <citation type="journal article" date="2015" name="Genome Announc.">
        <title>Genome sequence of Aspergillus flavus NRRL 3357, a strain that causes aflatoxin contamination of food and feed.</title>
        <authorList>
            <person name="Nierman W.C."/>
            <person name="Yu J."/>
            <person name="Fedorova-Abrams N.D."/>
            <person name="Losada L."/>
            <person name="Cleveland T.E."/>
            <person name="Bhatnagar D."/>
            <person name="Bennett J.W."/>
            <person name="Dean R."/>
            <person name="Payne G.A."/>
        </authorList>
    </citation>
    <scope>NUCLEOTIDE SEQUENCE [LARGE SCALE GENOMIC DNA]</scope>
    <source>
        <strain>ATCC 200026 / FGSC A1120 / IAM 13836 / NRRL 3357 / JCM 12722 / SRRC 167</strain>
    </source>
</reference>
<proteinExistence type="inferred from homology"/>
<evidence type="ECO:0000250" key="1"/>
<evidence type="ECO:0000255" key="2"/>
<evidence type="ECO:0000305" key="3"/>
<comment type="function">
    <text evidence="1">Specific in hydrolyzing the terminal glycosidic bond of polygalacturonic acid and oligogalacturonates.</text>
</comment>
<comment type="catalytic activity">
    <reaction>
        <text>[(1-&gt;4)-alpha-D-galacturonosyl](n) + H2O = alpha-D-galacturonate + [(1-&gt;4)-alpha-D-galacturonosyl](n-1)</text>
        <dbReference type="Rhea" id="RHEA:14117"/>
        <dbReference type="Rhea" id="RHEA-COMP:14570"/>
        <dbReference type="Rhea" id="RHEA-COMP:14572"/>
        <dbReference type="ChEBI" id="CHEBI:15377"/>
        <dbReference type="ChEBI" id="CHEBI:58658"/>
        <dbReference type="ChEBI" id="CHEBI:140523"/>
        <dbReference type="EC" id="3.2.1.67"/>
    </reaction>
</comment>
<comment type="subcellular location">
    <subcellularLocation>
        <location evidence="1">Secreted</location>
    </subcellularLocation>
</comment>
<comment type="similarity">
    <text evidence="3">Belongs to the glycosyl hydrolase 28 family.</text>
</comment>
<comment type="sequence caution" evidence="3">
    <conflict type="erroneous gene model prediction">
        <sequence resource="EMBL-CDS" id="EED49721"/>
    </conflict>
</comment>
<organism>
    <name type="scientific">Aspergillus flavus (strain ATCC 200026 / FGSC A1120 / IAM 13836 / NRRL 3357 / JCM 12722 / SRRC 167)</name>
    <dbReference type="NCBI Taxonomy" id="332952"/>
    <lineage>
        <taxon>Eukaryota</taxon>
        <taxon>Fungi</taxon>
        <taxon>Dikarya</taxon>
        <taxon>Ascomycota</taxon>
        <taxon>Pezizomycotina</taxon>
        <taxon>Eurotiomycetes</taxon>
        <taxon>Eurotiomycetidae</taxon>
        <taxon>Eurotiales</taxon>
        <taxon>Aspergillaceae</taxon>
        <taxon>Aspergillus</taxon>
        <taxon>Aspergillus subgen. Circumdati</taxon>
    </lineage>
</organism>
<sequence>MKLSGSSALLLLGFGLLGHASPLVHVQGKNCTVKPLGHGQDDVPNILHAVEKCGQTPGGRISLPAPYTYRINQRMTTHLESSTLEVGGMLLFSDDITYWVNNSYRIDFQNQSTAWRITGHDYVVDGGPERGGIDGNGQLWYTWAKGGSNVFGRPMPLHVLNSTRAVLRNIAIRQPQFWAVLVESSSHVELDNFYVNATNSDPNATEDTVWIQNTDGIDTYRSDHVTITNWVYEGGDDAVAFKPNSTNIHVENVTVYGGPGIAFGSLGQYPDRYDIVENITVKNANFQPSSQRAMNSGIYFKSWIGVNFGVPPNGGGNGHGYVRNVTVEDITFKDVQLPIYIDTCLSYLFDQNVTQYCDTSTFRFDDLHFRNISGNGLATPTNYTGRNITFAVSMICSKEAPCTDITFEDVDIKLPESYSGKSVLCENAGVQGLECNS</sequence>
<keyword id="KW-0119">Carbohydrate metabolism</keyword>
<keyword id="KW-0961">Cell wall biogenesis/degradation</keyword>
<keyword id="KW-1015">Disulfide bond</keyword>
<keyword id="KW-0325">Glycoprotein</keyword>
<keyword id="KW-0326">Glycosidase</keyword>
<keyword id="KW-0378">Hydrolase</keyword>
<keyword id="KW-0624">Polysaccharide degradation</keyword>
<keyword id="KW-0677">Repeat</keyword>
<keyword id="KW-0964">Secreted</keyword>
<keyword id="KW-0732">Signal</keyword>
<dbReference type="EC" id="3.2.1.67"/>
<dbReference type="EMBL" id="EQ963479">
    <property type="protein sequence ID" value="EED49721.1"/>
    <property type="status" value="ALT_SEQ"/>
    <property type="molecule type" value="Genomic_DNA"/>
</dbReference>
<dbReference type="RefSeq" id="XP_002380102.1">
    <property type="nucleotide sequence ID" value="XM_002380061.1"/>
</dbReference>
<dbReference type="SMR" id="B8NJB0"/>
<dbReference type="STRING" id="332952.B8NJB0"/>
<dbReference type="GlyCosmos" id="B8NJB0">
    <property type="glycosylation" value="14 sites, No reported glycans"/>
</dbReference>
<dbReference type="VEuPathDB" id="FungiDB:AFLA_008471"/>
<dbReference type="GO" id="GO:0005576">
    <property type="term" value="C:extracellular region"/>
    <property type="evidence" value="ECO:0007669"/>
    <property type="project" value="UniProtKB-SubCell"/>
</dbReference>
<dbReference type="GO" id="GO:0047911">
    <property type="term" value="F:galacturan 1,4-alpha-galacturonidase activity"/>
    <property type="evidence" value="ECO:0007669"/>
    <property type="project" value="UniProtKB-EC"/>
</dbReference>
<dbReference type="GO" id="GO:0004650">
    <property type="term" value="F:polygalacturonase activity"/>
    <property type="evidence" value="ECO:0007669"/>
    <property type="project" value="InterPro"/>
</dbReference>
<dbReference type="GO" id="GO:0071555">
    <property type="term" value="P:cell wall organization"/>
    <property type="evidence" value="ECO:0007669"/>
    <property type="project" value="UniProtKB-KW"/>
</dbReference>
<dbReference type="GO" id="GO:0045490">
    <property type="term" value="P:pectin catabolic process"/>
    <property type="evidence" value="ECO:0007669"/>
    <property type="project" value="UniProtKB-ARBA"/>
</dbReference>
<dbReference type="Gene3D" id="2.160.20.10">
    <property type="entry name" value="Single-stranded right-handed beta-helix, Pectin lyase-like"/>
    <property type="match status" value="1"/>
</dbReference>
<dbReference type="InterPro" id="IPR000743">
    <property type="entry name" value="Glyco_hydro_28"/>
</dbReference>
<dbReference type="InterPro" id="IPR006626">
    <property type="entry name" value="PbH1"/>
</dbReference>
<dbReference type="InterPro" id="IPR012334">
    <property type="entry name" value="Pectin_lyas_fold"/>
</dbReference>
<dbReference type="InterPro" id="IPR011050">
    <property type="entry name" value="Pectin_lyase_fold/virulence"/>
</dbReference>
<dbReference type="PANTHER" id="PTHR31736">
    <property type="match status" value="1"/>
</dbReference>
<dbReference type="PANTHER" id="PTHR31736:SF12">
    <property type="entry name" value="EXO-POLYGALACTURONASE, PUTATIVE-RELATED"/>
    <property type="match status" value="1"/>
</dbReference>
<dbReference type="Pfam" id="PF00295">
    <property type="entry name" value="Glyco_hydro_28"/>
    <property type="match status" value="1"/>
</dbReference>
<dbReference type="SMART" id="SM00710">
    <property type="entry name" value="PbH1"/>
    <property type="match status" value="4"/>
</dbReference>
<dbReference type="SUPFAM" id="SSF51126">
    <property type="entry name" value="Pectin lyase-like"/>
    <property type="match status" value="1"/>
</dbReference>
<gene>
    <name type="primary">rgxA</name>
    <name type="ORF">AFLA_065430</name>
</gene>
<accession>B8NJB0</accession>
<protein>
    <recommendedName>
        <fullName>Putative galacturan 1,4-alpha-galacturonidase A</fullName>
        <ecNumber>3.2.1.67</ecNumber>
    </recommendedName>
    <alternativeName>
        <fullName>Exopolygalacturonase A</fullName>
    </alternativeName>
    <alternativeName>
        <fullName>Exorhamnogalacturonase A</fullName>
    </alternativeName>
    <alternativeName>
        <fullName>Poly(1,4-alpha-D-galacturonide)galacturonohydrolase rgxA</fullName>
    </alternativeName>
</protein>
<feature type="signal peptide" evidence="2">
    <location>
        <begin position="1"/>
        <end position="20"/>
    </location>
</feature>
<feature type="chain" id="PRO_0000395078" description="Putative galacturan 1,4-alpha-galacturonidase A">
    <location>
        <begin position="21"/>
        <end position="437"/>
    </location>
</feature>
<feature type="repeat" description="PbH1 1">
    <location>
        <begin position="222"/>
        <end position="243"/>
    </location>
</feature>
<feature type="repeat" description="PbH1 2">
    <location>
        <begin position="245"/>
        <end position="265"/>
    </location>
</feature>
<feature type="repeat" description="PbH1 3">
    <location>
        <begin position="276"/>
        <end position="302"/>
    </location>
</feature>
<feature type="repeat" description="PbH1 4">
    <location>
        <begin position="322"/>
        <end position="343"/>
    </location>
</feature>
<feature type="active site" description="Proton donor" evidence="1">
    <location>
        <position position="236"/>
    </location>
</feature>
<feature type="glycosylation site" description="N-linked (GlcNAc...) asparagine" evidence="2">
    <location>
        <position position="30"/>
    </location>
</feature>
<feature type="glycosylation site" description="N-linked (GlcNAc...) asparagine" evidence="2">
    <location>
        <position position="101"/>
    </location>
</feature>
<feature type="glycosylation site" description="N-linked (GlcNAc...) asparagine" evidence="2">
    <location>
        <position position="110"/>
    </location>
</feature>
<feature type="glycosylation site" description="N-linked (GlcNAc...) asparagine" evidence="2">
    <location>
        <position position="161"/>
    </location>
</feature>
<feature type="glycosylation site" description="N-linked (GlcNAc...) asparagine" evidence="2">
    <location>
        <position position="196"/>
    </location>
</feature>
<feature type="glycosylation site" description="N-linked (GlcNAc...) asparagine" evidence="2">
    <location>
        <position position="203"/>
    </location>
</feature>
<feature type="glycosylation site" description="N-linked (GlcNAc...) asparagine" evidence="2">
    <location>
        <position position="244"/>
    </location>
</feature>
<feature type="glycosylation site" description="N-linked (GlcNAc...) asparagine" evidence="2">
    <location>
        <position position="252"/>
    </location>
</feature>
<feature type="glycosylation site" description="N-linked (GlcNAc...) asparagine" evidence="2">
    <location>
        <position position="278"/>
    </location>
</feature>
<feature type="glycosylation site" description="N-linked (GlcNAc...) asparagine" evidence="2">
    <location>
        <position position="324"/>
    </location>
</feature>
<feature type="glycosylation site" description="N-linked (GlcNAc...) asparagine" evidence="2">
    <location>
        <position position="352"/>
    </location>
</feature>
<feature type="glycosylation site" description="N-linked (GlcNAc...) asparagine" evidence="2">
    <location>
        <position position="371"/>
    </location>
</feature>
<feature type="glycosylation site" description="N-linked (GlcNAc...) asparagine" evidence="2">
    <location>
        <position position="382"/>
    </location>
</feature>
<feature type="glycosylation site" description="N-linked (GlcNAc...) asparagine" evidence="2">
    <location>
        <position position="387"/>
    </location>
</feature>
<feature type="disulfide bond" evidence="1">
    <location>
        <begin position="396"/>
        <end position="402"/>
    </location>
</feature>